<feature type="chain" id="PRO_1000053204" description="ATP synthase gamma chain">
    <location>
        <begin position="1"/>
        <end position="287"/>
    </location>
</feature>
<proteinExistence type="inferred from homology"/>
<name>ATPG_ECOL5</name>
<accession>Q0TAX6</accession>
<sequence length="287" mass="31577">MAGAKEIRSKIASVQNTQKITKAMEMVAASKMRKSQDRMAASRPYAETMRKVIGHLAHGNLEYKHPYLEDRDVKRVGYLVVSTDRGLCGGLNINLFKKLLAEMKTWTDKGVQCDLAMIGSKGVSFFNSVGGNVVAQVTGMGDNPSLSELIGPVKVMLQAYDEGRLDKLYIVSNKFINTMSQVPTISQLLPLPASDDDDLKHKSWDYLYEPDPKALLDTLLRRYVESQVYQGVVENLASEQAARMVAMKAATDNGGSLIKELQLVYNKARQASITQELTEIVSGAAAV</sequence>
<comment type="function">
    <text evidence="1">Produces ATP from ADP in the presence of a proton gradient across the membrane. The gamma chain is believed to be important in regulating ATPase activity and the flow of protons through the CF(0) complex.</text>
</comment>
<comment type="subunit">
    <text evidence="1">F-type ATPases have 2 components, CF(1) - the catalytic core - and CF(0) - the membrane proton channel. CF(1) has five subunits: alpha(3), beta(3), gamma(1), delta(1), epsilon(1). CF(0) has three main subunits: a, b and c.</text>
</comment>
<comment type="subcellular location">
    <subcellularLocation>
        <location evidence="1">Cell inner membrane</location>
        <topology evidence="1">Peripheral membrane protein</topology>
    </subcellularLocation>
</comment>
<comment type="similarity">
    <text evidence="1">Belongs to the ATPase gamma chain family.</text>
</comment>
<organism>
    <name type="scientific">Escherichia coli O6:K15:H31 (strain 536 / UPEC)</name>
    <dbReference type="NCBI Taxonomy" id="362663"/>
    <lineage>
        <taxon>Bacteria</taxon>
        <taxon>Pseudomonadati</taxon>
        <taxon>Pseudomonadota</taxon>
        <taxon>Gammaproteobacteria</taxon>
        <taxon>Enterobacterales</taxon>
        <taxon>Enterobacteriaceae</taxon>
        <taxon>Escherichia</taxon>
    </lineage>
</organism>
<dbReference type="EMBL" id="CP000247">
    <property type="protein sequence ID" value="ABG71903.1"/>
    <property type="molecule type" value="Genomic_DNA"/>
</dbReference>
<dbReference type="RefSeq" id="WP_000896498.1">
    <property type="nucleotide sequence ID" value="NC_008253.1"/>
</dbReference>
<dbReference type="SMR" id="Q0TAX6"/>
<dbReference type="GeneID" id="93778234"/>
<dbReference type="KEGG" id="ecp:ECP_3932"/>
<dbReference type="HOGENOM" id="CLU_050669_0_1_6"/>
<dbReference type="Proteomes" id="UP000009182">
    <property type="component" value="Chromosome"/>
</dbReference>
<dbReference type="GO" id="GO:0005886">
    <property type="term" value="C:plasma membrane"/>
    <property type="evidence" value="ECO:0007669"/>
    <property type="project" value="UniProtKB-SubCell"/>
</dbReference>
<dbReference type="GO" id="GO:0045259">
    <property type="term" value="C:proton-transporting ATP synthase complex"/>
    <property type="evidence" value="ECO:0007669"/>
    <property type="project" value="UniProtKB-KW"/>
</dbReference>
<dbReference type="GO" id="GO:0005524">
    <property type="term" value="F:ATP binding"/>
    <property type="evidence" value="ECO:0007669"/>
    <property type="project" value="UniProtKB-UniRule"/>
</dbReference>
<dbReference type="GO" id="GO:0046933">
    <property type="term" value="F:proton-transporting ATP synthase activity, rotational mechanism"/>
    <property type="evidence" value="ECO:0007669"/>
    <property type="project" value="UniProtKB-UniRule"/>
</dbReference>
<dbReference type="GO" id="GO:0042777">
    <property type="term" value="P:proton motive force-driven plasma membrane ATP synthesis"/>
    <property type="evidence" value="ECO:0007669"/>
    <property type="project" value="UniProtKB-UniRule"/>
</dbReference>
<dbReference type="CDD" id="cd12151">
    <property type="entry name" value="F1-ATPase_gamma"/>
    <property type="match status" value="1"/>
</dbReference>
<dbReference type="FunFam" id="1.10.287.80:FF:000005">
    <property type="entry name" value="ATP synthase gamma chain"/>
    <property type="match status" value="2"/>
</dbReference>
<dbReference type="FunFam" id="3.40.1380.10:FF:000001">
    <property type="entry name" value="ATP synthase gamma chain"/>
    <property type="match status" value="1"/>
</dbReference>
<dbReference type="Gene3D" id="3.40.1380.10">
    <property type="match status" value="1"/>
</dbReference>
<dbReference type="Gene3D" id="1.10.287.80">
    <property type="entry name" value="ATP synthase, gamma subunit, helix hairpin domain"/>
    <property type="match status" value="1"/>
</dbReference>
<dbReference type="HAMAP" id="MF_00815">
    <property type="entry name" value="ATP_synth_gamma_bact"/>
    <property type="match status" value="1"/>
</dbReference>
<dbReference type="InterPro" id="IPR035968">
    <property type="entry name" value="ATP_synth_F1_ATPase_gsu"/>
</dbReference>
<dbReference type="InterPro" id="IPR000131">
    <property type="entry name" value="ATP_synth_F1_gsu"/>
</dbReference>
<dbReference type="InterPro" id="IPR023632">
    <property type="entry name" value="ATP_synth_F1_gsu_CS"/>
</dbReference>
<dbReference type="NCBIfam" id="TIGR01146">
    <property type="entry name" value="ATPsyn_F1gamma"/>
    <property type="match status" value="1"/>
</dbReference>
<dbReference type="NCBIfam" id="NF004144">
    <property type="entry name" value="PRK05621.1-1"/>
    <property type="match status" value="1"/>
</dbReference>
<dbReference type="PANTHER" id="PTHR11693">
    <property type="entry name" value="ATP SYNTHASE GAMMA CHAIN"/>
    <property type="match status" value="1"/>
</dbReference>
<dbReference type="PANTHER" id="PTHR11693:SF22">
    <property type="entry name" value="ATP SYNTHASE SUBUNIT GAMMA, MITOCHONDRIAL"/>
    <property type="match status" value="1"/>
</dbReference>
<dbReference type="Pfam" id="PF00231">
    <property type="entry name" value="ATP-synt"/>
    <property type="match status" value="1"/>
</dbReference>
<dbReference type="PRINTS" id="PR00126">
    <property type="entry name" value="ATPASEGAMMA"/>
</dbReference>
<dbReference type="SUPFAM" id="SSF52943">
    <property type="entry name" value="ATP synthase (F1-ATPase), gamma subunit"/>
    <property type="match status" value="1"/>
</dbReference>
<dbReference type="PROSITE" id="PS00153">
    <property type="entry name" value="ATPASE_GAMMA"/>
    <property type="match status" value="1"/>
</dbReference>
<gene>
    <name evidence="1" type="primary">atpG</name>
    <name type="ordered locus">ECP_3932</name>
</gene>
<reference key="1">
    <citation type="journal article" date="2006" name="Mol. Microbiol.">
        <title>Role of pathogenicity island-associated integrases in the genome plasticity of uropathogenic Escherichia coli strain 536.</title>
        <authorList>
            <person name="Hochhut B."/>
            <person name="Wilde C."/>
            <person name="Balling G."/>
            <person name="Middendorf B."/>
            <person name="Dobrindt U."/>
            <person name="Brzuszkiewicz E."/>
            <person name="Gottschalk G."/>
            <person name="Carniel E."/>
            <person name="Hacker J."/>
        </authorList>
    </citation>
    <scope>NUCLEOTIDE SEQUENCE [LARGE SCALE GENOMIC DNA]</scope>
    <source>
        <strain>536 / UPEC</strain>
    </source>
</reference>
<protein>
    <recommendedName>
        <fullName evidence="1">ATP synthase gamma chain</fullName>
    </recommendedName>
    <alternativeName>
        <fullName evidence="1">ATP synthase F1 sector gamma subunit</fullName>
    </alternativeName>
    <alternativeName>
        <fullName evidence="1">F-ATPase gamma subunit</fullName>
    </alternativeName>
</protein>
<evidence type="ECO:0000255" key="1">
    <source>
        <dbReference type="HAMAP-Rule" id="MF_00815"/>
    </source>
</evidence>
<keyword id="KW-0066">ATP synthesis</keyword>
<keyword id="KW-0997">Cell inner membrane</keyword>
<keyword id="KW-1003">Cell membrane</keyword>
<keyword id="KW-0139">CF(1)</keyword>
<keyword id="KW-0375">Hydrogen ion transport</keyword>
<keyword id="KW-0406">Ion transport</keyword>
<keyword id="KW-0472">Membrane</keyword>
<keyword id="KW-0813">Transport</keyword>